<keyword id="KW-1015">Disulfide bond</keyword>
<keyword id="KW-0325">Glycoprotein</keyword>
<keyword id="KW-0328">Glycosyltransferase</keyword>
<keyword id="KW-0732">Signal</keyword>
<keyword id="KW-0808">Transferase</keyword>
<keyword id="KW-0926">Vacuole</keyword>
<proteinExistence type="evidence at protein level"/>
<protein>
    <recommendedName>
        <fullName>Cyanidin 3-O-glucoside 7-O-glucosyltransferase (acyl-glucose)</fullName>
        <shortName>AA7GT</shortName>
        <shortName>Dg AA7GT</shortName>
        <ecNumber evidence="6">2.4.1.300</ecNumber>
    </recommendedName>
    <alternativeName>
        <fullName>Acyl-glucose-dependent anthocyanin 7-O-glucosytransferase</fullName>
    </alternativeName>
    <alternativeName>
        <fullName>Beta-glucosidase like protein</fullName>
        <shortName>DgBGLUL</shortName>
    </alternativeName>
</protein>
<organism>
    <name type="scientific">Delphinium grandiflorum</name>
    <name type="common">Siberian larkspur</name>
    <name type="synonym">Delphinium sinense</name>
    <dbReference type="NCBI Taxonomy" id="85439"/>
    <lineage>
        <taxon>Eukaryota</taxon>
        <taxon>Viridiplantae</taxon>
        <taxon>Streptophyta</taxon>
        <taxon>Embryophyta</taxon>
        <taxon>Tracheophyta</taxon>
        <taxon>Spermatophyta</taxon>
        <taxon>Magnoliopsida</taxon>
        <taxon>Ranunculales</taxon>
        <taxon>Ranunculaceae</taxon>
        <taxon>Ranunculoideae</taxon>
        <taxon>Delphinieae</taxon>
        <taxon>Delphinium</taxon>
    </lineage>
</organism>
<gene>
    <name type="primary">AA7GT</name>
</gene>
<comment type="function">
    <text evidence="6">Beta-glycosidase that catalyzes the transfer of glucose moiety to anthocyanidin 3-glucoside at the 7 position. Anthocyanins are ubiquitous colored pigments that are responsible for variations in petal color.</text>
</comment>
<comment type="catalytic activity">
    <reaction evidence="6">
        <text>1-O-(4-hydroxy-3-methoxybenzoyl)-beta-D-glucose + cyanidin 3-O-beta-D-glucoside = cyanidin 3,7-di-O-beta-D-glucoside + vanillate</text>
        <dbReference type="Rhea" id="RHEA:35431"/>
        <dbReference type="ChEBI" id="CHEBI:16632"/>
        <dbReference type="ChEBI" id="CHEBI:71512"/>
        <dbReference type="ChEBI" id="CHEBI:71513"/>
        <dbReference type="ChEBI" id="CHEBI:77857"/>
        <dbReference type="EC" id="2.4.1.300"/>
    </reaction>
</comment>
<comment type="biophysicochemical properties">
    <kinetics>
        <KM evidence="6">22.9 mM for cyanidin 3-glucopyranoside (at pH 5.0 and 30 degrees Celsius)</KM>
        <KM evidence="6">260.8 mM for 1-O-beta-D-vanillyl-glucose (at pH 5.0 and 30 degrees Celsius)</KM>
        <text>kcat is 0.17 sec(-1) with cyanidin 3-glucopyranoside (at pH 5.0 and 30 degrees Celsius). kcat is 0.10 sec(-1) with 1-O-beta-D-vanillyl-glucose (at pH 5.0 and 30 degrees Celsius).</text>
    </kinetics>
    <phDependence>
        <text>Optimum pH is 6.0.</text>
    </phDependence>
    <temperatureDependence>
        <text evidence="6">Optimum temperature is 40 degrees Celsius.</text>
    </temperatureDependence>
</comment>
<comment type="pathway">
    <text evidence="6">Pigment biosynthesis; anthocyanin biosynthesis.</text>
</comment>
<comment type="subcellular location">
    <subcellularLocation>
        <location evidence="6">Vacuole</location>
    </subcellularLocation>
</comment>
<comment type="similarity">
    <text evidence="7">Belongs to the glycosyl hydrolase 1 family.</text>
</comment>
<accession>E3W9M3</accession>
<dbReference type="EC" id="2.4.1.300" evidence="6"/>
<dbReference type="EMBL" id="AB510758">
    <property type="protein sequence ID" value="BAJ33502.1"/>
    <property type="molecule type" value="mRNA"/>
</dbReference>
<dbReference type="SMR" id="E3W9M3"/>
<dbReference type="CAZy" id="GH1">
    <property type="family name" value="Glycoside Hydrolase Family 1"/>
</dbReference>
<dbReference type="GlyCosmos" id="E3W9M3">
    <property type="glycosylation" value="6 sites, No reported glycans"/>
</dbReference>
<dbReference type="KEGG" id="ag:BAJ33502"/>
<dbReference type="BioCyc" id="MetaCyc:MONOMER-17864"/>
<dbReference type="BRENDA" id="2.4.1.300">
    <property type="organism ID" value="8950"/>
</dbReference>
<dbReference type="SABIO-RK" id="E3W9M3"/>
<dbReference type="UniPathway" id="UPA00009"/>
<dbReference type="GO" id="GO:0000325">
    <property type="term" value="C:plant-type vacuole"/>
    <property type="evidence" value="ECO:0000314"/>
    <property type="project" value="UniProtKB"/>
</dbReference>
<dbReference type="GO" id="GO:0008422">
    <property type="term" value="F:beta-glucosidase activity"/>
    <property type="evidence" value="ECO:0007669"/>
    <property type="project" value="TreeGrafter"/>
</dbReference>
<dbReference type="GO" id="GO:0102457">
    <property type="term" value="F:cyanidin 3-O-glucoside 7-O-glucosyltransferase (acyl-glucose) activity"/>
    <property type="evidence" value="ECO:0007669"/>
    <property type="project" value="UniProtKB-EC"/>
</dbReference>
<dbReference type="GO" id="GO:0016758">
    <property type="term" value="F:hexosyltransferase activity"/>
    <property type="evidence" value="ECO:0000314"/>
    <property type="project" value="UniProtKB"/>
</dbReference>
<dbReference type="GO" id="GO:0009718">
    <property type="term" value="P:anthocyanin-containing compound biosynthetic process"/>
    <property type="evidence" value="ECO:0000314"/>
    <property type="project" value="UniProtKB"/>
</dbReference>
<dbReference type="GO" id="GO:0005975">
    <property type="term" value="P:carbohydrate metabolic process"/>
    <property type="evidence" value="ECO:0007669"/>
    <property type="project" value="InterPro"/>
</dbReference>
<dbReference type="FunFam" id="3.20.20.80:FF:000069">
    <property type="entry name" value="Beta-glucosidase 1"/>
    <property type="match status" value="1"/>
</dbReference>
<dbReference type="Gene3D" id="3.20.20.80">
    <property type="entry name" value="Glycosidases"/>
    <property type="match status" value="1"/>
</dbReference>
<dbReference type="InterPro" id="IPR001360">
    <property type="entry name" value="Glyco_hydro_1"/>
</dbReference>
<dbReference type="InterPro" id="IPR017853">
    <property type="entry name" value="Glycoside_hydrolase_SF"/>
</dbReference>
<dbReference type="PANTHER" id="PTHR10353:SF29">
    <property type="entry name" value="BETA-GLUCOSIDASE 11"/>
    <property type="match status" value="1"/>
</dbReference>
<dbReference type="PANTHER" id="PTHR10353">
    <property type="entry name" value="GLYCOSYL HYDROLASE"/>
    <property type="match status" value="1"/>
</dbReference>
<dbReference type="Pfam" id="PF00232">
    <property type="entry name" value="Glyco_hydro_1"/>
    <property type="match status" value="1"/>
</dbReference>
<dbReference type="PRINTS" id="PR00131">
    <property type="entry name" value="GLHYDRLASE1"/>
</dbReference>
<dbReference type="SUPFAM" id="SSF51445">
    <property type="entry name" value="(Trans)glycosidases"/>
    <property type="match status" value="1"/>
</dbReference>
<reference key="1">
    <citation type="journal article" date="2010" name="Plant Cell">
        <title>A novel glucosylation reaction on anthocyanins catalyzed by acyl-glucose-dependent glucosyltransferase in the petals of carnation and delphinium.</title>
        <authorList>
            <person name="Matsuba Y."/>
            <person name="Sasaki N."/>
            <person name="Tera M."/>
            <person name="Okamura M."/>
            <person name="Abe Y."/>
            <person name="Okamoto E."/>
            <person name="Nakamura H."/>
            <person name="Funabashi H."/>
            <person name="Takatsu M."/>
            <person name="Saito M."/>
            <person name="Matsuoka H."/>
            <person name="Nagasawa K."/>
            <person name="Ozeki Y."/>
        </authorList>
    </citation>
    <scope>NUCLEOTIDE SEQUENCE [MRNA]</scope>
    <scope>FUNCTION</scope>
    <scope>CATALYTIC ACTIVITY</scope>
    <scope>BIOPHYSICOCHEMICAL PROPERTIES</scope>
    <scope>PATHWAY</scope>
    <scope>SUBCELLULAR LOCATION</scope>
    <source>
        <tissue>Petal</tissue>
    </source>
</reference>
<evidence type="ECO:0000250" key="1">
    <source>
        <dbReference type="UniProtKB" id="P49235"/>
    </source>
</evidence>
<evidence type="ECO:0000250" key="2">
    <source>
        <dbReference type="UniProtKB" id="Q7XSK0"/>
    </source>
</evidence>
<evidence type="ECO:0000250" key="3">
    <source>
        <dbReference type="UniProtKB" id="Q9SPP9"/>
    </source>
</evidence>
<evidence type="ECO:0000255" key="4"/>
<evidence type="ECO:0000255" key="5">
    <source>
        <dbReference type="PROSITE-ProRule" id="PRU00498"/>
    </source>
</evidence>
<evidence type="ECO:0000269" key="6">
    <source>
    </source>
</evidence>
<evidence type="ECO:0000305" key="7"/>
<sequence>MCPSFLVTLLLLQLSSLVVVLVVWAEQLPEFNVRRDDFPSNFVFGAGTSALQVEGAIAEDGKTPNIWDVDSHMGHMPDKSTTDIACDSYHRYKEDVKIMSDIGLEAYRFSIAWTRILPYGRGFINPKGVEYYNNLIDTLLEHGIQPHATIYHIDHPQILEDEYGGWLSPRMIEDFTTYADVCFREFGDRVSHWTTINEPNIISLGAYDSGQIPPHRCTPPGAYNCTAGNSSVEPYKAMHHFLLAHASAVQIYRTKYQAKQKGLIGLNVYGFWCAPQTNSRADIEATKRATAFYTGWAADPLVFGDYPIIMKENVGSRLPSFTKNESELVKGSFDFIGLNHYFVFYIQDDPEEITTPISLRNFDSDMRVKASVKPGDSGDPSGLKNLLRYFKDNYGNPPVYVHENGFGSPQNETLDDDMGRIRYISGYIGSMLEAIKNGSDTRGYFVWSFMDAFEILSGYQTRYGIVHVDFDDKSLKRQLKPSAQWYSNFIKKKNTTEDEISYSSQ</sequence>
<feature type="signal peptide" evidence="4">
    <location>
        <begin position="1"/>
        <end position="25"/>
    </location>
</feature>
<feature type="chain" id="PRO_0000422569" description="Cyanidin 3-O-glucoside 7-O-glucosyltransferase (acyl-glucose)">
    <location>
        <begin position="26"/>
        <end position="505"/>
    </location>
</feature>
<feature type="active site" description="Proton donor" evidence="2">
    <location>
        <position position="198"/>
    </location>
</feature>
<feature type="active site" description="Nucleophile" evidence="2">
    <location>
        <position position="403"/>
    </location>
</feature>
<feature type="binding site" evidence="2">
    <location>
        <position position="52"/>
    </location>
    <ligand>
        <name>a beta-D-glucoside</name>
        <dbReference type="ChEBI" id="CHEBI:22798"/>
    </ligand>
</feature>
<feature type="binding site" evidence="2">
    <location>
        <position position="152"/>
    </location>
    <ligand>
        <name>a beta-D-glucoside</name>
        <dbReference type="ChEBI" id="CHEBI:22798"/>
    </ligand>
</feature>
<feature type="binding site" evidence="2">
    <location>
        <begin position="197"/>
        <end position="198"/>
    </location>
    <ligand>
        <name>a beta-D-glucoside</name>
        <dbReference type="ChEBI" id="CHEBI:22798"/>
    </ligand>
</feature>
<feature type="binding site" evidence="2">
    <location>
        <position position="341"/>
    </location>
    <ligand>
        <name>a beta-D-glucoside</name>
        <dbReference type="ChEBI" id="CHEBI:22798"/>
    </ligand>
</feature>
<feature type="binding site" evidence="3">
    <location>
        <position position="403"/>
    </location>
    <ligand>
        <name>a beta-D-glucoside</name>
        <dbReference type="ChEBI" id="CHEBI:22798"/>
    </ligand>
</feature>
<feature type="binding site" evidence="2">
    <location>
        <position position="447"/>
    </location>
    <ligand>
        <name>a beta-D-glucoside</name>
        <dbReference type="ChEBI" id="CHEBI:22798"/>
    </ligand>
</feature>
<feature type="binding site" evidence="1">
    <location>
        <position position="463"/>
    </location>
    <ligand>
        <name>a beta-D-glucoside</name>
        <dbReference type="ChEBI" id="CHEBI:22798"/>
    </ligand>
</feature>
<feature type="glycosylation site" description="N-linked (GlcNAc...) asparagine" evidence="5">
    <location>
        <position position="224"/>
    </location>
</feature>
<feature type="glycosylation site" description="N-linked (GlcNAc...) asparagine" evidence="5">
    <location>
        <position position="229"/>
    </location>
</feature>
<feature type="glycosylation site" description="N-linked (GlcNAc...) asparagine" evidence="5">
    <location>
        <position position="324"/>
    </location>
</feature>
<feature type="glycosylation site" description="N-linked (GlcNAc...) asparagine" evidence="5">
    <location>
        <position position="411"/>
    </location>
</feature>
<feature type="glycosylation site" description="N-linked (GlcNAc...) asparagine" evidence="5">
    <location>
        <position position="437"/>
    </location>
</feature>
<feature type="glycosylation site" description="N-linked (GlcNAc...) asparagine" evidence="5">
    <location>
        <position position="494"/>
    </location>
</feature>
<feature type="disulfide bond" evidence="2">
    <location>
        <begin position="217"/>
        <end position="225"/>
    </location>
</feature>
<name>AA7GT_DELGR</name>